<keyword id="KW-0186">Copper</keyword>
<keyword id="KW-0249">Electron transport</keyword>
<keyword id="KW-0460">Magnesium</keyword>
<keyword id="KW-0472">Membrane</keyword>
<keyword id="KW-0479">Metal-binding</keyword>
<keyword id="KW-0496">Mitochondrion</keyword>
<keyword id="KW-0999">Mitochondrion inner membrane</keyword>
<keyword id="KW-0597">Phosphoprotein</keyword>
<keyword id="KW-0679">Respiratory chain</keyword>
<keyword id="KW-1278">Translocase</keyword>
<keyword id="KW-0812">Transmembrane</keyword>
<keyword id="KW-1133">Transmembrane helix</keyword>
<keyword id="KW-0813">Transport</keyword>
<name>COX2_UROCI</name>
<comment type="function">
    <text evidence="3">Component of the cytochrome c oxidase, the last enzyme in the mitochondrial electron transport chain which drives oxidative phosphorylation. The respiratory chain contains 3 multisubunit complexes succinate dehydrogenase (complex II, CII), ubiquinol-cytochrome c oxidoreductase (cytochrome b-c1 complex, complex III, CIII) and cytochrome c oxidase (complex IV, CIV), that cooperate to transfer electrons derived from NADH and succinate to molecular oxygen, creating an electrochemical gradient over the inner membrane that drives transmembrane transport and the ATP synthase. Cytochrome c oxidase is the component of the respiratory chain that catalyzes the reduction of oxygen to water. Electrons originating from reduced cytochrome c in the intermembrane space (IMS) are transferred via the dinuclear copper A center (CU(A)) of subunit 2 and heme A of subunit 1 to the active site in subunit 1, a binuclear center (BNC) formed by heme A3 and copper B (CU(B)). The BNC reduces molecular oxygen to 2 water molecules using 4 electrons from cytochrome c in the IMS and 4 protons from the mitochondrial matrix.</text>
</comment>
<comment type="catalytic activity">
    <reaction evidence="3">
        <text>4 Fe(II)-[cytochrome c] + O2 + 8 H(+)(in) = 4 Fe(III)-[cytochrome c] + 2 H2O + 4 H(+)(out)</text>
        <dbReference type="Rhea" id="RHEA:11436"/>
        <dbReference type="Rhea" id="RHEA-COMP:10350"/>
        <dbReference type="Rhea" id="RHEA-COMP:14399"/>
        <dbReference type="ChEBI" id="CHEBI:15377"/>
        <dbReference type="ChEBI" id="CHEBI:15378"/>
        <dbReference type="ChEBI" id="CHEBI:15379"/>
        <dbReference type="ChEBI" id="CHEBI:29033"/>
        <dbReference type="ChEBI" id="CHEBI:29034"/>
        <dbReference type="EC" id="7.1.1.9"/>
    </reaction>
    <physiologicalReaction direction="left-to-right" evidence="3">
        <dbReference type="Rhea" id="RHEA:11437"/>
    </physiologicalReaction>
</comment>
<comment type="cofactor">
    <cofactor evidence="4">
        <name>Cu cation</name>
        <dbReference type="ChEBI" id="CHEBI:23378"/>
    </cofactor>
    <text evidence="4">Binds a dinuclear copper A center per subunit.</text>
</comment>
<comment type="subunit">
    <text evidence="1 4">Component of the cytochrome c oxidase (complex IV, CIV), a multisubunit enzyme composed of 14 subunits. The complex is composed of a catalytic core of 3 subunits MT-CO1, MT-CO2 and MT-CO3, encoded in the mitochondrial DNA, and 11 supernumerary subunits COX4I, COX5A, COX5B, COX6A, COX6B, COX6C, COX7A, COX7B, COX7C, COX8 and NDUFA4, which are encoded in the nuclear genome. The complex exists as a monomer or a dimer and forms supercomplexes (SCs) in the inner mitochondrial membrane with NADH-ubiquinone oxidoreductase (complex I, CI) and ubiquinol-cytochrome c oxidoreductase (cytochrome b-c1 complex, complex III, CIII), resulting in different assemblies (supercomplex SCI(1)III(2)IV(1) and megacomplex MCI(2)III(2)IV(2)) (By similarity). Found in a complex with TMEM177, COA6, COX18, COX20, SCO1 and SCO2. Interacts with TMEM177 in a COX20-dependent manner. Interacts with COX20. Interacts with COX16 (By similarity).</text>
</comment>
<comment type="subcellular location">
    <subcellularLocation>
        <location evidence="4">Mitochondrion inner membrane</location>
        <topology evidence="4">Multi-pass membrane protein</topology>
    </subcellularLocation>
</comment>
<comment type="similarity">
    <text evidence="5">Belongs to the cytochrome c oxidase subunit 2 family.</text>
</comment>
<organism>
    <name type="scientific">Urocyon cinereoargenteus</name>
    <name type="common">Gray fox</name>
    <dbReference type="NCBI Taxonomy" id="55040"/>
    <lineage>
        <taxon>Eukaryota</taxon>
        <taxon>Metazoa</taxon>
        <taxon>Chordata</taxon>
        <taxon>Craniata</taxon>
        <taxon>Vertebrata</taxon>
        <taxon>Euteleostomi</taxon>
        <taxon>Mammalia</taxon>
        <taxon>Eutheria</taxon>
        <taxon>Laurasiatheria</taxon>
        <taxon>Carnivora</taxon>
        <taxon>Caniformia</taxon>
        <taxon>Canidae</taxon>
        <taxon>Urocyon</taxon>
    </lineage>
</organism>
<dbReference type="EC" id="7.1.1.9"/>
<dbReference type="EMBL" id="AF028228">
    <property type="protein sequence ID" value="AAC00121.1"/>
    <property type="molecule type" value="Genomic_DNA"/>
</dbReference>
<dbReference type="RefSeq" id="YP_009128784.1">
    <property type="nucleotide sequence ID" value="NC_026723.1"/>
</dbReference>
<dbReference type="SMR" id="O48276"/>
<dbReference type="GeneID" id="23765078"/>
<dbReference type="CTD" id="4513"/>
<dbReference type="GO" id="GO:0005743">
    <property type="term" value="C:mitochondrial inner membrane"/>
    <property type="evidence" value="ECO:0007669"/>
    <property type="project" value="UniProtKB-SubCell"/>
</dbReference>
<dbReference type="GO" id="GO:0045277">
    <property type="term" value="C:respiratory chain complex IV"/>
    <property type="evidence" value="ECO:0000250"/>
    <property type="project" value="UniProtKB"/>
</dbReference>
<dbReference type="GO" id="GO:0005507">
    <property type="term" value="F:copper ion binding"/>
    <property type="evidence" value="ECO:0007669"/>
    <property type="project" value="InterPro"/>
</dbReference>
<dbReference type="GO" id="GO:0004129">
    <property type="term" value="F:cytochrome-c oxidase activity"/>
    <property type="evidence" value="ECO:0007669"/>
    <property type="project" value="UniProtKB-EC"/>
</dbReference>
<dbReference type="GO" id="GO:0042773">
    <property type="term" value="P:ATP synthesis coupled electron transport"/>
    <property type="evidence" value="ECO:0007669"/>
    <property type="project" value="TreeGrafter"/>
</dbReference>
<dbReference type="CDD" id="cd13912">
    <property type="entry name" value="CcO_II_C"/>
    <property type="match status" value="1"/>
</dbReference>
<dbReference type="FunFam" id="1.10.287.90:FF:000001">
    <property type="entry name" value="Cytochrome c oxidase subunit 2"/>
    <property type="match status" value="1"/>
</dbReference>
<dbReference type="FunFam" id="2.60.40.420:FF:000001">
    <property type="entry name" value="Cytochrome c oxidase subunit 2"/>
    <property type="match status" value="1"/>
</dbReference>
<dbReference type="Gene3D" id="1.10.287.90">
    <property type="match status" value="1"/>
</dbReference>
<dbReference type="Gene3D" id="2.60.40.420">
    <property type="entry name" value="Cupredoxins - blue copper proteins"/>
    <property type="match status" value="1"/>
</dbReference>
<dbReference type="InterPro" id="IPR045187">
    <property type="entry name" value="CcO_II"/>
</dbReference>
<dbReference type="InterPro" id="IPR002429">
    <property type="entry name" value="CcO_II-like_C"/>
</dbReference>
<dbReference type="InterPro" id="IPR034210">
    <property type="entry name" value="CcO_II_C"/>
</dbReference>
<dbReference type="InterPro" id="IPR001505">
    <property type="entry name" value="Copper_CuA"/>
</dbReference>
<dbReference type="InterPro" id="IPR008972">
    <property type="entry name" value="Cupredoxin"/>
</dbReference>
<dbReference type="InterPro" id="IPR014222">
    <property type="entry name" value="Cyt_c_oxidase_su2"/>
</dbReference>
<dbReference type="InterPro" id="IPR011759">
    <property type="entry name" value="Cyt_c_oxidase_su2_TM_dom"/>
</dbReference>
<dbReference type="InterPro" id="IPR036257">
    <property type="entry name" value="Cyt_c_oxidase_su2_TM_sf"/>
</dbReference>
<dbReference type="NCBIfam" id="TIGR02866">
    <property type="entry name" value="CoxB"/>
    <property type="match status" value="1"/>
</dbReference>
<dbReference type="PANTHER" id="PTHR22888:SF9">
    <property type="entry name" value="CYTOCHROME C OXIDASE SUBUNIT 2"/>
    <property type="match status" value="1"/>
</dbReference>
<dbReference type="PANTHER" id="PTHR22888">
    <property type="entry name" value="CYTOCHROME C OXIDASE, SUBUNIT II"/>
    <property type="match status" value="1"/>
</dbReference>
<dbReference type="Pfam" id="PF00116">
    <property type="entry name" value="COX2"/>
    <property type="match status" value="1"/>
</dbReference>
<dbReference type="Pfam" id="PF02790">
    <property type="entry name" value="COX2_TM"/>
    <property type="match status" value="1"/>
</dbReference>
<dbReference type="PRINTS" id="PR01166">
    <property type="entry name" value="CYCOXIDASEII"/>
</dbReference>
<dbReference type="SUPFAM" id="SSF49503">
    <property type="entry name" value="Cupredoxins"/>
    <property type="match status" value="1"/>
</dbReference>
<dbReference type="SUPFAM" id="SSF81464">
    <property type="entry name" value="Cytochrome c oxidase subunit II-like, transmembrane region"/>
    <property type="match status" value="1"/>
</dbReference>
<dbReference type="PROSITE" id="PS00078">
    <property type="entry name" value="COX2"/>
    <property type="match status" value="1"/>
</dbReference>
<dbReference type="PROSITE" id="PS50857">
    <property type="entry name" value="COX2_CUA"/>
    <property type="match status" value="1"/>
</dbReference>
<dbReference type="PROSITE" id="PS50999">
    <property type="entry name" value="COX2_TM"/>
    <property type="match status" value="1"/>
</dbReference>
<gene>
    <name type="primary">MT-CO2</name>
    <name type="synonym">COII</name>
    <name type="synonym">COX2</name>
    <name type="synonym">COXII</name>
    <name type="synonym">MTCO2</name>
</gene>
<proteinExistence type="inferred from homology"/>
<protein>
    <recommendedName>
        <fullName>Cytochrome c oxidase subunit 2</fullName>
        <ecNumber>7.1.1.9</ecNumber>
    </recommendedName>
    <alternativeName>
        <fullName>Cytochrome c oxidase polypeptide II</fullName>
    </alternativeName>
</protein>
<accession>O48276</accession>
<geneLocation type="mitochondrion"/>
<feature type="chain" id="PRO_0000183710" description="Cytochrome c oxidase subunit 2">
    <location>
        <begin position="1"/>
        <end position="227"/>
    </location>
</feature>
<feature type="topological domain" description="Mitochondrial intermembrane" evidence="4">
    <location>
        <begin position="1"/>
        <end position="14"/>
    </location>
</feature>
<feature type="transmembrane region" description="Helical; Name=I" evidence="4">
    <location>
        <begin position="15"/>
        <end position="45"/>
    </location>
</feature>
<feature type="topological domain" description="Mitochondrial matrix" evidence="4">
    <location>
        <begin position="46"/>
        <end position="59"/>
    </location>
</feature>
<feature type="transmembrane region" description="Helical; Name=II" evidence="4">
    <location>
        <begin position="60"/>
        <end position="87"/>
    </location>
</feature>
<feature type="topological domain" description="Mitochondrial intermembrane" evidence="4">
    <location>
        <begin position="88"/>
        <end position="227"/>
    </location>
</feature>
<feature type="binding site" evidence="4">
    <location>
        <position position="161"/>
    </location>
    <ligand>
        <name>Cu cation</name>
        <dbReference type="ChEBI" id="CHEBI:23378"/>
        <label>A1</label>
    </ligand>
</feature>
<feature type="binding site" evidence="4">
    <location>
        <position position="196"/>
    </location>
    <ligand>
        <name>Cu cation</name>
        <dbReference type="ChEBI" id="CHEBI:23378"/>
        <label>A1</label>
    </ligand>
</feature>
<feature type="binding site" evidence="4">
    <location>
        <position position="196"/>
    </location>
    <ligand>
        <name>Cu cation</name>
        <dbReference type="ChEBI" id="CHEBI:23378"/>
        <label>A2</label>
    </ligand>
</feature>
<feature type="binding site" evidence="4">
    <location>
        <position position="198"/>
    </location>
    <ligand>
        <name>Cu cation</name>
        <dbReference type="ChEBI" id="CHEBI:23378"/>
        <label>A2</label>
    </ligand>
</feature>
<feature type="binding site" evidence="4">
    <location>
        <position position="198"/>
    </location>
    <ligand>
        <name>Mg(2+)</name>
        <dbReference type="ChEBI" id="CHEBI:18420"/>
        <note>ligand shared with MT-CO1</note>
    </ligand>
</feature>
<feature type="binding site" evidence="4">
    <location>
        <position position="200"/>
    </location>
    <ligand>
        <name>Cu cation</name>
        <dbReference type="ChEBI" id="CHEBI:23378"/>
        <label>A1</label>
    </ligand>
</feature>
<feature type="binding site" evidence="4">
    <location>
        <position position="200"/>
    </location>
    <ligand>
        <name>Cu cation</name>
        <dbReference type="ChEBI" id="CHEBI:23378"/>
        <label>A2</label>
    </ligand>
</feature>
<feature type="binding site" evidence="4">
    <location>
        <position position="204"/>
    </location>
    <ligand>
        <name>Cu cation</name>
        <dbReference type="ChEBI" id="CHEBI:23378"/>
        <label>A2</label>
    </ligand>
</feature>
<feature type="binding site" evidence="4">
    <location>
        <position position="207"/>
    </location>
    <ligand>
        <name>Cu cation</name>
        <dbReference type="ChEBI" id="CHEBI:23378"/>
        <label>A1</label>
    </ligand>
</feature>
<feature type="modified residue" description="Phosphotyrosine" evidence="2">
    <location>
        <position position="218"/>
    </location>
</feature>
<sequence>MAYPFQLGLQDATSPIMEELLHFHDHTLMIVFLISSLVLYIISLMLTTKLTHTSTMDAQEVETVWTILPAIILILIALPSLRILYMMDEINNPSLTVKTMGHQWYWSYEYTDYEDLNFDSYMIPTQELKPGELRLLEVDNRVVLPMEMTVRMLISSEDVLHSWAVPSLGLKTDAIPGRLNQTTLMAMRPGLYYGQCSEICGSNHSFMPIVLEMVPLSYFETWSALMV</sequence>
<evidence type="ECO:0000250" key="1">
    <source>
        <dbReference type="UniProtKB" id="P00403"/>
    </source>
</evidence>
<evidence type="ECO:0000250" key="2">
    <source>
        <dbReference type="UniProtKB" id="P00406"/>
    </source>
</evidence>
<evidence type="ECO:0000250" key="3">
    <source>
        <dbReference type="UniProtKB" id="P00410"/>
    </source>
</evidence>
<evidence type="ECO:0000250" key="4">
    <source>
        <dbReference type="UniProtKB" id="P68530"/>
    </source>
</evidence>
<evidence type="ECO:0000305" key="5"/>
<reference key="1">
    <citation type="journal article" date="1997" name="Syst. Biol.">
        <title>Molecular systematics of the Canidae.</title>
        <authorList>
            <person name="Wayne R.K."/>
            <person name="Geffen E."/>
            <person name="Girman D.J."/>
            <person name="Koepfli K.-P."/>
            <person name="Lau L.M."/>
            <person name="Marshall C.R."/>
        </authorList>
    </citation>
    <scope>NUCLEOTIDE SEQUENCE [GENOMIC DNA]</scope>
</reference>